<dbReference type="EMBL" id="Z71678">
    <property type="protein sequence ID" value="CAA96345.1"/>
    <property type="molecule type" value="Genomic_DNA"/>
</dbReference>
<dbReference type="EMBL" id="BK006947">
    <property type="protein sequence ID" value="DAA10604.1"/>
    <property type="molecule type" value="Genomic_DNA"/>
</dbReference>
<dbReference type="PIR" id="S63395">
    <property type="entry name" value="S63395"/>
</dbReference>
<dbReference type="SMR" id="P53749"/>
<dbReference type="BioGRID" id="35889">
    <property type="interactions" value="38"/>
</dbReference>
<dbReference type="DIP" id="DIP-2853N"/>
<dbReference type="FunCoup" id="P53749">
    <property type="interactions" value="40"/>
</dbReference>
<dbReference type="IntAct" id="P53749">
    <property type="interactions" value="1"/>
</dbReference>
<dbReference type="MINT" id="P53749"/>
<dbReference type="STRING" id="4932.YNR063W"/>
<dbReference type="iPTMnet" id="P53749"/>
<dbReference type="PaxDb" id="4932-YNR063W"/>
<dbReference type="PeptideAtlas" id="P53749"/>
<dbReference type="EnsemblFungi" id="YNR063W_mRNA">
    <property type="protein sequence ID" value="YNR063W"/>
    <property type="gene ID" value="YNR063W"/>
</dbReference>
<dbReference type="KEGG" id="sce:YNR063W"/>
<dbReference type="AGR" id="SGD:S000005346"/>
<dbReference type="SGD" id="S000005346">
    <property type="gene designation" value="YNR063W"/>
</dbReference>
<dbReference type="VEuPathDB" id="FungiDB:YNR063W"/>
<dbReference type="eggNOG" id="ENOG502QRWI">
    <property type="taxonomic scope" value="Eukaryota"/>
</dbReference>
<dbReference type="GeneTree" id="ENSGT00940000176304"/>
<dbReference type="HOGENOM" id="CLU_449939_0_0_1"/>
<dbReference type="InParanoid" id="P53749"/>
<dbReference type="OMA" id="LMANFMT"/>
<dbReference type="OrthoDB" id="5600212at2759"/>
<dbReference type="BioCyc" id="YEAST:G3O-33367-MONOMER"/>
<dbReference type="BioGRID-ORCS" id="855800">
    <property type="hits" value="0 hits in 13 CRISPR screens"/>
</dbReference>
<dbReference type="PRO" id="PR:P53749"/>
<dbReference type="Proteomes" id="UP000002311">
    <property type="component" value="Chromosome XIV"/>
</dbReference>
<dbReference type="RNAct" id="P53749">
    <property type="molecule type" value="protein"/>
</dbReference>
<dbReference type="GO" id="GO:0005634">
    <property type="term" value="C:nucleus"/>
    <property type="evidence" value="ECO:0000318"/>
    <property type="project" value="GO_Central"/>
</dbReference>
<dbReference type="GO" id="GO:0000981">
    <property type="term" value="F:DNA-binding transcription factor activity, RNA polymerase II-specific"/>
    <property type="evidence" value="ECO:0000318"/>
    <property type="project" value="GO_Central"/>
</dbReference>
<dbReference type="GO" id="GO:0000978">
    <property type="term" value="F:RNA polymerase II cis-regulatory region sequence-specific DNA binding"/>
    <property type="evidence" value="ECO:0000318"/>
    <property type="project" value="GO_Central"/>
</dbReference>
<dbReference type="GO" id="GO:0043565">
    <property type="term" value="F:sequence-specific DNA binding"/>
    <property type="evidence" value="ECO:0007005"/>
    <property type="project" value="SGD"/>
</dbReference>
<dbReference type="GO" id="GO:0008270">
    <property type="term" value="F:zinc ion binding"/>
    <property type="evidence" value="ECO:0007669"/>
    <property type="project" value="InterPro"/>
</dbReference>
<dbReference type="GO" id="GO:0006351">
    <property type="term" value="P:DNA-templated transcription"/>
    <property type="evidence" value="ECO:0007669"/>
    <property type="project" value="InterPro"/>
</dbReference>
<dbReference type="CDD" id="cd12148">
    <property type="entry name" value="fungal_TF_MHR"/>
    <property type="match status" value="1"/>
</dbReference>
<dbReference type="CDD" id="cd00067">
    <property type="entry name" value="GAL4"/>
    <property type="match status" value="1"/>
</dbReference>
<dbReference type="Gene3D" id="4.10.240.10">
    <property type="entry name" value="Zn(2)-C6 fungal-type DNA-binding domain"/>
    <property type="match status" value="1"/>
</dbReference>
<dbReference type="InterPro" id="IPR051127">
    <property type="entry name" value="Fungal_SecMet_Regulators"/>
</dbReference>
<dbReference type="InterPro" id="IPR007219">
    <property type="entry name" value="Transcription_factor_dom_fun"/>
</dbReference>
<dbReference type="InterPro" id="IPR036864">
    <property type="entry name" value="Zn2-C6_fun-type_DNA-bd_sf"/>
</dbReference>
<dbReference type="InterPro" id="IPR001138">
    <property type="entry name" value="Zn2Cys6_DnaBD"/>
</dbReference>
<dbReference type="PANTHER" id="PTHR47424">
    <property type="entry name" value="REGULATORY PROTEIN GAL4"/>
    <property type="match status" value="1"/>
</dbReference>
<dbReference type="PANTHER" id="PTHR47424:SF3">
    <property type="entry name" value="REGULATORY PROTEIN GAL4"/>
    <property type="match status" value="1"/>
</dbReference>
<dbReference type="Pfam" id="PF04082">
    <property type="entry name" value="Fungal_trans"/>
    <property type="match status" value="1"/>
</dbReference>
<dbReference type="Pfam" id="PF00172">
    <property type="entry name" value="Zn_clus"/>
    <property type="match status" value="1"/>
</dbReference>
<dbReference type="SMART" id="SM00066">
    <property type="entry name" value="GAL4"/>
    <property type="match status" value="1"/>
</dbReference>
<dbReference type="SUPFAM" id="SSF57701">
    <property type="entry name" value="Zn2/Cys6 DNA-binding domain"/>
    <property type="match status" value="1"/>
</dbReference>
<dbReference type="PROSITE" id="PS00463">
    <property type="entry name" value="ZN2_CY6_FUNGAL_1"/>
    <property type="match status" value="1"/>
</dbReference>
<dbReference type="PROSITE" id="PS50048">
    <property type="entry name" value="ZN2_CY6_FUNGAL_2"/>
    <property type="match status" value="1"/>
</dbReference>
<name>YN92_YEAST</name>
<proteinExistence type="evidence at protein level"/>
<reference key="1">
    <citation type="journal article" date="1997" name="Nature">
        <title>The nucleotide sequence of Saccharomyces cerevisiae chromosome XIV and its evolutionary implications.</title>
        <authorList>
            <person name="Philippsen P."/>
            <person name="Kleine K."/>
            <person name="Poehlmann R."/>
            <person name="Duesterhoeft A."/>
            <person name="Hamberg K."/>
            <person name="Hegemann J.H."/>
            <person name="Obermaier B."/>
            <person name="Urrestarazu L.A."/>
            <person name="Aert R."/>
            <person name="Albermann K."/>
            <person name="Altmann R."/>
            <person name="Andre B."/>
            <person name="Baladron V."/>
            <person name="Ballesta J.P.G."/>
            <person name="Becam A.-M."/>
            <person name="Beinhauer J.D."/>
            <person name="Boskovic J."/>
            <person name="Buitrago M.J."/>
            <person name="Bussereau F."/>
            <person name="Coster F."/>
            <person name="Crouzet M."/>
            <person name="D'Angelo M."/>
            <person name="Dal Pero F."/>
            <person name="De Antoni A."/>
            <person name="del Rey F."/>
            <person name="Doignon F."/>
            <person name="Domdey H."/>
            <person name="Dubois E."/>
            <person name="Fiedler T.A."/>
            <person name="Fleig U."/>
            <person name="Floeth M."/>
            <person name="Fritz C."/>
            <person name="Gaillardin C."/>
            <person name="Garcia-Cantalejo J.M."/>
            <person name="Glansdorff N."/>
            <person name="Goffeau A."/>
            <person name="Gueldener U."/>
            <person name="Herbert C.J."/>
            <person name="Heumann K."/>
            <person name="Heuss-Neitzel D."/>
            <person name="Hilbert H."/>
            <person name="Hinni K."/>
            <person name="Iraqui Houssaini I."/>
            <person name="Jacquet M."/>
            <person name="Jimenez A."/>
            <person name="Jonniaux J.-L."/>
            <person name="Karpfinger-Hartl L."/>
            <person name="Lanfranchi G."/>
            <person name="Lepingle A."/>
            <person name="Levesque H."/>
            <person name="Lyck R."/>
            <person name="Maftahi M."/>
            <person name="Mallet L."/>
            <person name="Maurer C.T.C."/>
            <person name="Messenguy F."/>
            <person name="Mewes H.-W."/>
            <person name="Moestl D."/>
            <person name="Nasr F."/>
            <person name="Nicaud J.-M."/>
            <person name="Niedenthal R.K."/>
            <person name="Pandolfo D."/>
            <person name="Pierard A."/>
            <person name="Piravandi E."/>
            <person name="Planta R.J."/>
            <person name="Pohl T.M."/>
            <person name="Purnelle B."/>
            <person name="Rebischung C."/>
            <person name="Remacha M.A."/>
            <person name="Revuelta J.L."/>
            <person name="Rinke M."/>
            <person name="Saiz J.E."/>
            <person name="Sartorello F."/>
            <person name="Scherens B."/>
            <person name="Sen-Gupta M."/>
            <person name="Soler-Mira A."/>
            <person name="Urbanus J.H.M."/>
            <person name="Valle G."/>
            <person name="Van Dyck L."/>
            <person name="Verhasselt P."/>
            <person name="Vierendeels F."/>
            <person name="Vissers S."/>
            <person name="Voet M."/>
            <person name="Volckaert G."/>
            <person name="Wach A."/>
            <person name="Wambutt R."/>
            <person name="Wedler H."/>
            <person name="Zollner A."/>
            <person name="Hani J."/>
        </authorList>
    </citation>
    <scope>NUCLEOTIDE SEQUENCE [LARGE SCALE GENOMIC DNA]</scope>
    <source>
        <strain>ATCC 204508 / S288c</strain>
    </source>
</reference>
<reference key="2">
    <citation type="journal article" date="2014" name="G3 (Bethesda)">
        <title>The reference genome sequence of Saccharomyces cerevisiae: Then and now.</title>
        <authorList>
            <person name="Engel S.R."/>
            <person name="Dietrich F.S."/>
            <person name="Fisk D.G."/>
            <person name="Binkley G."/>
            <person name="Balakrishnan R."/>
            <person name="Costanzo M.C."/>
            <person name="Dwight S.S."/>
            <person name="Hitz B.C."/>
            <person name="Karra K."/>
            <person name="Nash R.S."/>
            <person name="Weng S."/>
            <person name="Wong E.D."/>
            <person name="Lloyd P."/>
            <person name="Skrzypek M.S."/>
            <person name="Miyasato S.R."/>
            <person name="Simison M."/>
            <person name="Cherry J.M."/>
        </authorList>
    </citation>
    <scope>GENOME REANNOTATION</scope>
    <source>
        <strain>ATCC 204508 / S288c</strain>
    </source>
</reference>
<reference key="3">
    <citation type="journal article" date="2008" name="Mol. Cell. Proteomics">
        <title>A multidimensional chromatography technology for in-depth phosphoproteome analysis.</title>
        <authorList>
            <person name="Albuquerque C.P."/>
            <person name="Smolka M.B."/>
            <person name="Payne S.H."/>
            <person name="Bafna V."/>
            <person name="Eng J."/>
            <person name="Zhou H."/>
        </authorList>
    </citation>
    <scope>IDENTIFICATION BY MASS SPECTROMETRY [LARGE SCALE ANALYSIS]</scope>
</reference>
<sequence length="607" mass="69663">MDRSKDARKRSISLACTVCRKRKLKCDGNKPCGRCIRLNTPKECIYNIDKRKDKRKIKNGSKVFLFKNNTIDNGNNSILENKGLNEDLSSHIYEKEAPKFDSDIDISRFGTNDAVIFNNDGWDTSLPIDFDFDEFNTETTDFDDFLKLLGDNSPSKEQKSLSYSPTATGLSGVVKETESEDNAPTRSRLIDVLFENKLHSVPGISKWHLYELESQYPNLECTEGNSDEKFLLSTVLCLGSLTIRKRELLNHSNIDNRPLLPENSISKLTTDAFKYYNAAKTLVPDLLSHPTIDGFCGLVLMANFMTMMISLEHQLYLSINALQLAVALNLNNNTKCKELLESNSDGIGVILLFWNIWCSSCMLATIHGKNPFITLEQITTPLPCEISPRNKTNKLLIDFMQIRIKLATLQSKIFQRLYTSSTANEVPFVNLEREFEEVSLQITRLKGFPIFEEHLFYRSRVLMLELSCLRAQASFLLYRPYLITGESLQAVTMAKSIIHEIWSQYTKQFPDNEKERHERLDWNFCYPLRTASLTLCISCIILLRYKQVVQFLKGTELFEYILALEILQDLVQVLPIEQNLIDIIKYPISPVQLSGDSFVEFWGRILY</sequence>
<feature type="chain" id="PRO_0000115005" description="Uncharacterized transcriptional regulatory protein YNR063W">
    <location>
        <begin position="1"/>
        <end position="607"/>
    </location>
</feature>
<feature type="DNA-binding region" description="Zn(2)-C6 fungal-type" evidence="1">
    <location>
        <begin position="16"/>
        <end position="44"/>
    </location>
</feature>
<keyword id="KW-0238">DNA-binding</keyword>
<keyword id="KW-0479">Metal-binding</keyword>
<keyword id="KW-0539">Nucleus</keyword>
<keyword id="KW-1185">Reference proteome</keyword>
<keyword id="KW-0804">Transcription</keyword>
<keyword id="KW-0805">Transcription regulation</keyword>
<keyword id="KW-0862">Zinc</keyword>
<organism>
    <name type="scientific">Saccharomyces cerevisiae (strain ATCC 204508 / S288c)</name>
    <name type="common">Baker's yeast</name>
    <dbReference type="NCBI Taxonomy" id="559292"/>
    <lineage>
        <taxon>Eukaryota</taxon>
        <taxon>Fungi</taxon>
        <taxon>Dikarya</taxon>
        <taxon>Ascomycota</taxon>
        <taxon>Saccharomycotina</taxon>
        <taxon>Saccharomycetes</taxon>
        <taxon>Saccharomycetales</taxon>
        <taxon>Saccharomycetaceae</taxon>
        <taxon>Saccharomyces</taxon>
    </lineage>
</organism>
<evidence type="ECO:0000255" key="1">
    <source>
        <dbReference type="PROSITE-ProRule" id="PRU00227"/>
    </source>
</evidence>
<evidence type="ECO:0000305" key="2"/>
<accession>P53749</accession>
<accession>D6W1N8</accession>
<protein>
    <recommendedName>
        <fullName>Uncharacterized transcriptional regulatory protein YNR063W</fullName>
    </recommendedName>
</protein>
<comment type="subcellular location">
    <subcellularLocation>
        <location evidence="2">Nucleus</location>
    </subcellularLocation>
</comment>
<gene>
    <name type="ordered locus">YNR063W</name>
    <name type="ORF">N3531</name>
</gene>